<dbReference type="EC" id="2.7.2.11" evidence="1"/>
<dbReference type="EMBL" id="CP000482">
    <property type="protein sequence ID" value="ABL00551.1"/>
    <property type="molecule type" value="Genomic_DNA"/>
</dbReference>
<dbReference type="RefSeq" id="WP_011736786.1">
    <property type="nucleotide sequence ID" value="NC_008609.1"/>
</dbReference>
<dbReference type="SMR" id="A1AT80"/>
<dbReference type="STRING" id="338966.Ppro_2953"/>
<dbReference type="KEGG" id="ppd:Ppro_2953"/>
<dbReference type="eggNOG" id="COG0263">
    <property type="taxonomic scope" value="Bacteria"/>
</dbReference>
<dbReference type="HOGENOM" id="CLU_025400_2_0_7"/>
<dbReference type="OrthoDB" id="9804434at2"/>
<dbReference type="UniPathway" id="UPA00098">
    <property type="reaction ID" value="UER00359"/>
</dbReference>
<dbReference type="Proteomes" id="UP000006732">
    <property type="component" value="Chromosome"/>
</dbReference>
<dbReference type="GO" id="GO:0005829">
    <property type="term" value="C:cytosol"/>
    <property type="evidence" value="ECO:0007669"/>
    <property type="project" value="TreeGrafter"/>
</dbReference>
<dbReference type="GO" id="GO:0005524">
    <property type="term" value="F:ATP binding"/>
    <property type="evidence" value="ECO:0007669"/>
    <property type="project" value="UniProtKB-KW"/>
</dbReference>
<dbReference type="GO" id="GO:0004349">
    <property type="term" value="F:glutamate 5-kinase activity"/>
    <property type="evidence" value="ECO:0007669"/>
    <property type="project" value="UniProtKB-UniRule"/>
</dbReference>
<dbReference type="GO" id="GO:0003723">
    <property type="term" value="F:RNA binding"/>
    <property type="evidence" value="ECO:0007669"/>
    <property type="project" value="InterPro"/>
</dbReference>
<dbReference type="GO" id="GO:0055129">
    <property type="term" value="P:L-proline biosynthetic process"/>
    <property type="evidence" value="ECO:0007669"/>
    <property type="project" value="UniProtKB-UniRule"/>
</dbReference>
<dbReference type="CDD" id="cd04242">
    <property type="entry name" value="AAK_G5K_ProB"/>
    <property type="match status" value="1"/>
</dbReference>
<dbReference type="CDD" id="cd21157">
    <property type="entry name" value="PUA_G5K"/>
    <property type="match status" value="1"/>
</dbReference>
<dbReference type="FunFam" id="2.30.130.10:FF:000007">
    <property type="entry name" value="Glutamate 5-kinase"/>
    <property type="match status" value="1"/>
</dbReference>
<dbReference type="FunFam" id="3.40.1160.10:FF:000018">
    <property type="entry name" value="Glutamate 5-kinase"/>
    <property type="match status" value="1"/>
</dbReference>
<dbReference type="Gene3D" id="3.40.1160.10">
    <property type="entry name" value="Acetylglutamate kinase-like"/>
    <property type="match status" value="1"/>
</dbReference>
<dbReference type="Gene3D" id="2.30.130.10">
    <property type="entry name" value="PUA domain"/>
    <property type="match status" value="1"/>
</dbReference>
<dbReference type="HAMAP" id="MF_00456">
    <property type="entry name" value="ProB"/>
    <property type="match status" value="1"/>
</dbReference>
<dbReference type="InterPro" id="IPR036393">
    <property type="entry name" value="AceGlu_kinase-like_sf"/>
</dbReference>
<dbReference type="InterPro" id="IPR001048">
    <property type="entry name" value="Asp/Glu/Uridylate_kinase"/>
</dbReference>
<dbReference type="InterPro" id="IPR041739">
    <property type="entry name" value="G5K_ProB"/>
</dbReference>
<dbReference type="InterPro" id="IPR001057">
    <property type="entry name" value="Glu/AcGlu_kinase"/>
</dbReference>
<dbReference type="InterPro" id="IPR011529">
    <property type="entry name" value="Glu_5kinase"/>
</dbReference>
<dbReference type="InterPro" id="IPR005715">
    <property type="entry name" value="Glu_5kinase/COase_Synthase"/>
</dbReference>
<dbReference type="InterPro" id="IPR019797">
    <property type="entry name" value="Glutamate_5-kinase_CS"/>
</dbReference>
<dbReference type="InterPro" id="IPR002478">
    <property type="entry name" value="PUA"/>
</dbReference>
<dbReference type="InterPro" id="IPR015947">
    <property type="entry name" value="PUA-like_sf"/>
</dbReference>
<dbReference type="InterPro" id="IPR036974">
    <property type="entry name" value="PUA_sf"/>
</dbReference>
<dbReference type="NCBIfam" id="TIGR01027">
    <property type="entry name" value="proB"/>
    <property type="match status" value="1"/>
</dbReference>
<dbReference type="PANTHER" id="PTHR43654">
    <property type="entry name" value="GLUTAMATE 5-KINASE"/>
    <property type="match status" value="1"/>
</dbReference>
<dbReference type="PANTHER" id="PTHR43654:SF1">
    <property type="entry name" value="ISOPENTENYL PHOSPHATE KINASE"/>
    <property type="match status" value="1"/>
</dbReference>
<dbReference type="Pfam" id="PF00696">
    <property type="entry name" value="AA_kinase"/>
    <property type="match status" value="1"/>
</dbReference>
<dbReference type="Pfam" id="PF01472">
    <property type="entry name" value="PUA"/>
    <property type="match status" value="1"/>
</dbReference>
<dbReference type="PIRSF" id="PIRSF000729">
    <property type="entry name" value="GK"/>
    <property type="match status" value="1"/>
</dbReference>
<dbReference type="PRINTS" id="PR00474">
    <property type="entry name" value="GLU5KINASE"/>
</dbReference>
<dbReference type="SMART" id="SM00359">
    <property type="entry name" value="PUA"/>
    <property type="match status" value="1"/>
</dbReference>
<dbReference type="SUPFAM" id="SSF53633">
    <property type="entry name" value="Carbamate kinase-like"/>
    <property type="match status" value="1"/>
</dbReference>
<dbReference type="SUPFAM" id="SSF88697">
    <property type="entry name" value="PUA domain-like"/>
    <property type="match status" value="1"/>
</dbReference>
<dbReference type="PROSITE" id="PS00902">
    <property type="entry name" value="GLUTAMATE_5_KINASE"/>
    <property type="match status" value="1"/>
</dbReference>
<dbReference type="PROSITE" id="PS50890">
    <property type="entry name" value="PUA"/>
    <property type="match status" value="1"/>
</dbReference>
<reference key="1">
    <citation type="submission" date="2006-10" db="EMBL/GenBank/DDBJ databases">
        <title>Complete sequence of chromosome of Pelobacter propionicus DSM 2379.</title>
        <authorList>
            <consortium name="US DOE Joint Genome Institute"/>
            <person name="Copeland A."/>
            <person name="Lucas S."/>
            <person name="Lapidus A."/>
            <person name="Barry K."/>
            <person name="Detter J.C."/>
            <person name="Glavina del Rio T."/>
            <person name="Hammon N."/>
            <person name="Israni S."/>
            <person name="Dalin E."/>
            <person name="Tice H."/>
            <person name="Pitluck S."/>
            <person name="Saunders E."/>
            <person name="Brettin T."/>
            <person name="Bruce D."/>
            <person name="Han C."/>
            <person name="Tapia R."/>
            <person name="Schmutz J."/>
            <person name="Larimer F."/>
            <person name="Land M."/>
            <person name="Hauser L."/>
            <person name="Kyrpides N."/>
            <person name="Kim E."/>
            <person name="Lovley D."/>
            <person name="Richardson P."/>
        </authorList>
    </citation>
    <scope>NUCLEOTIDE SEQUENCE [LARGE SCALE GENOMIC DNA]</scope>
    <source>
        <strain>DSM 2379 / NBRC 103807 / OttBd1</strain>
    </source>
</reference>
<sequence>MRRELFRKIKRVVVKIGSRVLTDDEGALDMGVIGRICGDIASLRRQGRQVVLVSSGAIAAGRSELGMTEKPRTIPHKQAAAAIGQTRMMRAYEESFAPHGLKVAQVLLTREDLASRQRFLNARATLDALLGFGVIPVINENDTVVVEEIKFGDNDNLSALVTNVAEAGLLVIMTDIEGFYSADPRSNPDAVLVPLVQGITREIERAAGGSGSSVGTGGMATKVAAAKKAAKNGVPTIIVPGKREGIIATLMAGQEVGTLFLPLDACLNRRKHWLAYSLKPAGRIIVDDGAREVLLKKGKSLLPSGVLRVEGRFERGACVRVCGSDEQEFARGLSDYSSSEIARLAGQRSSRIEAILGYRYGDVIIHRDNLVVL</sequence>
<accession>A1AT80</accession>
<proteinExistence type="inferred from homology"/>
<name>PROB_PELPD</name>
<comment type="function">
    <text evidence="1">Catalyzes the transfer of a phosphate group to glutamate to form L-glutamate 5-phosphate.</text>
</comment>
<comment type="catalytic activity">
    <reaction evidence="1">
        <text>L-glutamate + ATP = L-glutamyl 5-phosphate + ADP</text>
        <dbReference type="Rhea" id="RHEA:14877"/>
        <dbReference type="ChEBI" id="CHEBI:29985"/>
        <dbReference type="ChEBI" id="CHEBI:30616"/>
        <dbReference type="ChEBI" id="CHEBI:58274"/>
        <dbReference type="ChEBI" id="CHEBI:456216"/>
        <dbReference type="EC" id="2.7.2.11"/>
    </reaction>
</comment>
<comment type="pathway">
    <text evidence="1">Amino-acid biosynthesis; L-proline biosynthesis; L-glutamate 5-semialdehyde from L-glutamate: step 1/2.</text>
</comment>
<comment type="subcellular location">
    <subcellularLocation>
        <location evidence="1">Cytoplasm</location>
    </subcellularLocation>
</comment>
<comment type="similarity">
    <text evidence="1">Belongs to the glutamate 5-kinase family.</text>
</comment>
<feature type="chain" id="PRO_1000081085" description="Glutamate 5-kinase">
    <location>
        <begin position="1"/>
        <end position="373"/>
    </location>
</feature>
<feature type="domain" description="PUA" evidence="1">
    <location>
        <begin position="281"/>
        <end position="359"/>
    </location>
</feature>
<feature type="binding site" evidence="1">
    <location>
        <position position="15"/>
    </location>
    <ligand>
        <name>ATP</name>
        <dbReference type="ChEBI" id="CHEBI:30616"/>
    </ligand>
</feature>
<feature type="binding site" evidence="1">
    <location>
        <position position="55"/>
    </location>
    <ligand>
        <name>substrate</name>
    </ligand>
</feature>
<feature type="binding site" evidence="1">
    <location>
        <position position="142"/>
    </location>
    <ligand>
        <name>substrate</name>
    </ligand>
</feature>
<feature type="binding site" evidence="1">
    <location>
        <position position="154"/>
    </location>
    <ligand>
        <name>substrate</name>
    </ligand>
</feature>
<feature type="binding site" evidence="1">
    <location>
        <begin position="174"/>
        <end position="175"/>
    </location>
    <ligand>
        <name>ATP</name>
        <dbReference type="ChEBI" id="CHEBI:30616"/>
    </ligand>
</feature>
<feature type="binding site" evidence="1">
    <location>
        <begin position="216"/>
        <end position="222"/>
    </location>
    <ligand>
        <name>ATP</name>
        <dbReference type="ChEBI" id="CHEBI:30616"/>
    </ligand>
</feature>
<keyword id="KW-0028">Amino-acid biosynthesis</keyword>
<keyword id="KW-0067">ATP-binding</keyword>
<keyword id="KW-0963">Cytoplasm</keyword>
<keyword id="KW-0418">Kinase</keyword>
<keyword id="KW-0547">Nucleotide-binding</keyword>
<keyword id="KW-0641">Proline biosynthesis</keyword>
<keyword id="KW-1185">Reference proteome</keyword>
<keyword id="KW-0808">Transferase</keyword>
<organism>
    <name type="scientific">Pelobacter propionicus (strain DSM 2379 / NBRC 103807 / OttBd1)</name>
    <dbReference type="NCBI Taxonomy" id="338966"/>
    <lineage>
        <taxon>Bacteria</taxon>
        <taxon>Pseudomonadati</taxon>
        <taxon>Thermodesulfobacteriota</taxon>
        <taxon>Desulfuromonadia</taxon>
        <taxon>Desulfuromonadales</taxon>
        <taxon>Desulfuromonadaceae</taxon>
        <taxon>Pelobacter</taxon>
    </lineage>
</organism>
<protein>
    <recommendedName>
        <fullName evidence="1">Glutamate 5-kinase</fullName>
        <ecNumber evidence="1">2.7.2.11</ecNumber>
    </recommendedName>
    <alternativeName>
        <fullName evidence="1">Gamma-glutamyl kinase</fullName>
        <shortName evidence="1">GK</shortName>
    </alternativeName>
</protein>
<evidence type="ECO:0000255" key="1">
    <source>
        <dbReference type="HAMAP-Rule" id="MF_00456"/>
    </source>
</evidence>
<gene>
    <name evidence="1" type="primary">proB</name>
    <name type="ordered locus">Ppro_2953</name>
</gene>